<gene>
    <name type="primary">Arl2</name>
    <name type="synonym">Arl184</name>
</gene>
<dbReference type="EMBL" id="Y12708">
    <property type="protein sequence ID" value="CAA73245.1"/>
    <property type="molecule type" value="mRNA"/>
</dbReference>
<dbReference type="RefSeq" id="NP_113899.1">
    <property type="nucleotide sequence ID" value="NM_031711.1"/>
</dbReference>
<dbReference type="SMR" id="O08697"/>
<dbReference type="BioGRID" id="249263">
    <property type="interactions" value="1"/>
</dbReference>
<dbReference type="FunCoup" id="O08697">
    <property type="interactions" value="2277"/>
</dbReference>
<dbReference type="IntAct" id="O08697">
    <property type="interactions" value="4"/>
</dbReference>
<dbReference type="STRING" id="10116.ENSRNOP00000028525"/>
<dbReference type="iPTMnet" id="O08697"/>
<dbReference type="PhosphoSitePlus" id="O08697"/>
<dbReference type="jPOST" id="O08697"/>
<dbReference type="PaxDb" id="10116-ENSRNOP00000028525"/>
<dbReference type="GeneID" id="65142"/>
<dbReference type="KEGG" id="rno:65142"/>
<dbReference type="UCSC" id="RGD:69326">
    <property type="organism name" value="rat"/>
</dbReference>
<dbReference type="AGR" id="RGD:69326"/>
<dbReference type="CTD" id="402"/>
<dbReference type="RGD" id="69326">
    <property type="gene designation" value="Arl2"/>
</dbReference>
<dbReference type="eggNOG" id="KOG0073">
    <property type="taxonomic scope" value="Eukaryota"/>
</dbReference>
<dbReference type="InParanoid" id="O08697"/>
<dbReference type="PhylomeDB" id="O08697"/>
<dbReference type="Reactome" id="R-RNO-83936">
    <property type="pathway name" value="Transport of nucleosides and free purine and pyrimidine bases across the plasma membrane"/>
</dbReference>
<dbReference type="Reactome" id="R-RNO-9648002">
    <property type="pathway name" value="RAS processing"/>
</dbReference>
<dbReference type="PRO" id="PR:O08697"/>
<dbReference type="Proteomes" id="UP000002494">
    <property type="component" value="Unplaced"/>
</dbReference>
<dbReference type="GO" id="GO:0005813">
    <property type="term" value="C:centrosome"/>
    <property type="evidence" value="ECO:0000250"/>
    <property type="project" value="UniProtKB"/>
</dbReference>
<dbReference type="GO" id="GO:0005737">
    <property type="term" value="C:cytoplasm"/>
    <property type="evidence" value="ECO:0000314"/>
    <property type="project" value="UniProtKB"/>
</dbReference>
<dbReference type="GO" id="GO:0016328">
    <property type="term" value="C:lateral plasma membrane"/>
    <property type="evidence" value="ECO:0000250"/>
    <property type="project" value="UniProtKB"/>
</dbReference>
<dbReference type="GO" id="GO:0015630">
    <property type="term" value="C:microtubule cytoskeleton"/>
    <property type="evidence" value="ECO:0000318"/>
    <property type="project" value="GO_Central"/>
</dbReference>
<dbReference type="GO" id="GO:0005758">
    <property type="term" value="C:mitochondrial intermembrane space"/>
    <property type="evidence" value="ECO:0000314"/>
    <property type="project" value="UniProtKB"/>
</dbReference>
<dbReference type="GO" id="GO:0005739">
    <property type="term" value="C:mitochondrion"/>
    <property type="evidence" value="ECO:0000266"/>
    <property type="project" value="RGD"/>
</dbReference>
<dbReference type="GO" id="GO:0005634">
    <property type="term" value="C:nucleus"/>
    <property type="evidence" value="ECO:0000250"/>
    <property type="project" value="UniProtKB"/>
</dbReference>
<dbReference type="GO" id="GO:0019003">
    <property type="term" value="F:GDP binding"/>
    <property type="evidence" value="ECO:0000266"/>
    <property type="project" value="RGD"/>
</dbReference>
<dbReference type="GO" id="GO:0005525">
    <property type="term" value="F:GTP binding"/>
    <property type="evidence" value="ECO:0000266"/>
    <property type="project" value="RGD"/>
</dbReference>
<dbReference type="GO" id="GO:0003924">
    <property type="term" value="F:GTPase activity"/>
    <property type="evidence" value="ECO:0000250"/>
    <property type="project" value="UniProtKB"/>
</dbReference>
<dbReference type="GO" id="GO:0015870">
    <property type="term" value="P:acetylcholine transport"/>
    <property type="evidence" value="ECO:0000314"/>
    <property type="project" value="RGD"/>
</dbReference>
<dbReference type="GO" id="GO:0070830">
    <property type="term" value="P:bicellular tight junction assembly"/>
    <property type="evidence" value="ECO:0000250"/>
    <property type="project" value="UniProtKB"/>
</dbReference>
<dbReference type="GO" id="GO:0007098">
    <property type="term" value="P:centrosome cycle"/>
    <property type="evidence" value="ECO:0000250"/>
    <property type="project" value="UniProtKB"/>
</dbReference>
<dbReference type="GO" id="GO:0051457">
    <property type="term" value="P:maintenance of protein location in nucleus"/>
    <property type="evidence" value="ECO:0000250"/>
    <property type="project" value="UniProtKB"/>
</dbReference>
<dbReference type="GO" id="GO:0034260">
    <property type="term" value="P:negative regulation of GTPase activity"/>
    <property type="evidence" value="ECO:0000250"/>
    <property type="project" value="UniProtKB"/>
</dbReference>
<dbReference type="GO" id="GO:0010811">
    <property type="term" value="P:positive regulation of cell-substrate adhesion"/>
    <property type="evidence" value="ECO:0000250"/>
    <property type="project" value="UniProtKB"/>
</dbReference>
<dbReference type="GO" id="GO:0031116">
    <property type="term" value="P:positive regulation of microtubule polymerization"/>
    <property type="evidence" value="ECO:0000250"/>
    <property type="project" value="UniProtKB"/>
</dbReference>
<dbReference type="GO" id="GO:0006457">
    <property type="term" value="P:protein folding"/>
    <property type="evidence" value="ECO:0000318"/>
    <property type="project" value="GO_Central"/>
</dbReference>
<dbReference type="GO" id="GO:1903715">
    <property type="term" value="P:regulation of aerobic respiration"/>
    <property type="evidence" value="ECO:0000266"/>
    <property type="project" value="RGD"/>
</dbReference>
<dbReference type="GO" id="GO:0006110">
    <property type="term" value="P:regulation of glycolytic process"/>
    <property type="evidence" value="ECO:0000266"/>
    <property type="project" value="RGD"/>
</dbReference>
<dbReference type="GO" id="GO:0031113">
    <property type="term" value="P:regulation of microtubule polymerization"/>
    <property type="evidence" value="ECO:0000250"/>
    <property type="project" value="UniProtKB"/>
</dbReference>
<dbReference type="CDD" id="cd04154">
    <property type="entry name" value="Arl2"/>
    <property type="match status" value="1"/>
</dbReference>
<dbReference type="FunFam" id="3.40.50.300:FF:000393">
    <property type="entry name" value="ADP-ribosylation factor-like 2, arl2"/>
    <property type="match status" value="1"/>
</dbReference>
<dbReference type="Gene3D" id="3.40.50.300">
    <property type="entry name" value="P-loop containing nucleotide triphosphate hydrolases"/>
    <property type="match status" value="1"/>
</dbReference>
<dbReference type="InterPro" id="IPR045873">
    <property type="entry name" value="Arl2"/>
</dbReference>
<dbReference type="InterPro" id="IPR044612">
    <property type="entry name" value="ARL2/3"/>
</dbReference>
<dbReference type="InterPro" id="IPR027417">
    <property type="entry name" value="P-loop_NTPase"/>
</dbReference>
<dbReference type="InterPro" id="IPR005225">
    <property type="entry name" value="Small_GTP-bd"/>
</dbReference>
<dbReference type="InterPro" id="IPR006689">
    <property type="entry name" value="Small_GTPase_ARF/SAR"/>
</dbReference>
<dbReference type="NCBIfam" id="TIGR00231">
    <property type="entry name" value="small_GTP"/>
    <property type="match status" value="1"/>
</dbReference>
<dbReference type="PANTHER" id="PTHR45697">
    <property type="entry name" value="ADP-RIBOSYLATION FACTOR-LIKE PROTEIN 2-RELATED"/>
    <property type="match status" value="1"/>
</dbReference>
<dbReference type="Pfam" id="PF00025">
    <property type="entry name" value="Arf"/>
    <property type="match status" value="1"/>
</dbReference>
<dbReference type="PRINTS" id="PR00328">
    <property type="entry name" value="SAR1GTPBP"/>
</dbReference>
<dbReference type="SMART" id="SM00177">
    <property type="entry name" value="ARF"/>
    <property type="match status" value="1"/>
</dbReference>
<dbReference type="SMART" id="SM00175">
    <property type="entry name" value="RAB"/>
    <property type="match status" value="1"/>
</dbReference>
<dbReference type="SMART" id="SM00178">
    <property type="entry name" value="SAR"/>
    <property type="match status" value="1"/>
</dbReference>
<dbReference type="SUPFAM" id="SSF52540">
    <property type="entry name" value="P-loop containing nucleoside triphosphate hydrolases"/>
    <property type="match status" value="1"/>
</dbReference>
<dbReference type="PROSITE" id="PS51417">
    <property type="entry name" value="ARF"/>
    <property type="match status" value="1"/>
</dbReference>
<accession>O08697</accession>
<name>ARL2_RAT</name>
<keyword id="KW-0131">Cell cycle</keyword>
<keyword id="KW-0963">Cytoplasm</keyword>
<keyword id="KW-0206">Cytoskeleton</keyword>
<keyword id="KW-0342">GTP-binding</keyword>
<keyword id="KW-1017">Isopeptide bond</keyword>
<keyword id="KW-0449">Lipoprotein</keyword>
<keyword id="KW-0496">Mitochondrion</keyword>
<keyword id="KW-0519">Myristate</keyword>
<keyword id="KW-0547">Nucleotide-binding</keyword>
<keyword id="KW-0539">Nucleus</keyword>
<keyword id="KW-0597">Phosphoprotein</keyword>
<keyword id="KW-1185">Reference proteome</keyword>
<keyword id="KW-0832">Ubl conjugation</keyword>
<protein>
    <recommendedName>
        <fullName>ADP-ribosylation factor-like protein 2</fullName>
    </recommendedName>
</protein>
<comment type="function">
    <text evidence="1">Small GTP-binding protein which cycles between an inactive GDP-bound and an active GTP-bound form, and the rate of cycling is regulated by guanine nucleotide exchange factors (GEF) and GTPase-activating proteins (GAP). GTP-binding protein that does not act as an allosteric activator of the cholera toxin catalytic subunit. Regulates formation of new microtubules and centrosome integrity. Prevents the TBCD-induced microtubule destruction. Participates in association with TBCD, in the disassembly of the apical junction complexes. Antagonizes the effect of TBCD on epithelial cell detachment and tight and adherens junctions disassembly. Together with ARL2, plays a role in the nuclear translocation, retention and transcriptional activity of STAT3. Component of a regulated secretory pathway involved in Ca(2+)-dependent release of acetylcholine. Required for normal progress through the cell cycle (By similarity).</text>
</comment>
<comment type="subunit">
    <text evidence="1">Found in a complex with ARL2, ARL2BP and SLC25A6. Found in a complex with at least ARL2, PPP2CB, PPP2R1A, PPP2R2A, PPP2R5E and TBCD. Interacts with ELMOD2. The GTP-bound form interacts with ARL2BP. The GDP-bound form interacts preferentially with TBCD. Interacts with UNC119. Found in a complex with ARL2, ARL2BP and SLC25A4. The GTP-bound form interacts with PDE6D (By similarity).</text>
</comment>
<comment type="subcellular location">
    <subcellularLocation>
        <location evidence="4">Mitochondrion intermembrane space</location>
    </subcellularLocation>
    <subcellularLocation>
        <location evidence="4">Cytoplasm</location>
        <location evidence="4">Cytoskeleton</location>
        <location evidence="4">Microtubule organizing center</location>
        <location evidence="4">Centrosome</location>
    </subcellularLocation>
    <subcellularLocation>
        <location evidence="4">Nucleus</location>
    </subcellularLocation>
    <subcellularLocation>
        <location evidence="4">Cytoplasm</location>
    </subcellularLocation>
    <text evidence="1">The complex formed with ARL2BP, ARL2 and SLC25A6 is expressed in mitochondria. Not detected in the Golgi, nucleus and on the mitotic spindle. Centrosome-associated throughout the cell cycle. Not detected to interphase microtubules. The complex formed with ARL2BP, ARL2 and SLC25A4 is expressed in mitochondria (By similarity).</text>
</comment>
<comment type="tissue specificity">
    <text evidence="4 5 6">Expressed in brain, retina, lung, cerebellum, liver, kidney, hippocampus, spleen, cortex and heart (at protein level).</text>
</comment>
<comment type="PTM">
    <text>Not N-myristoylated.</text>
</comment>
<comment type="similarity">
    <text evidence="7">Belongs to the small GTPase superfamily. Arf family.</text>
</comment>
<sequence length="184" mass="20836">MGLLTILKKMKQKERDVRLLMLGLDNAGKTTILKKFNGEDVDTISPTLGFNIKTLEHRGFKLNIWDVGGQKSLRSYWRNYFESTDGLIWVVDSADRQRMQDCQRELQSLLVEERLAGATLLIFANKQDLPGALSCNAIQEALELDSIRSHHWRIQGCSAVTGEDLLPGIDWLLDDISSRVFTAD</sequence>
<feature type="initiator methionine" description="Removed" evidence="3">
    <location>
        <position position="1"/>
    </location>
</feature>
<feature type="chain" id="PRO_0000207455" description="ADP-ribosylation factor-like protein 2">
    <location>
        <begin position="2"/>
        <end position="184"/>
    </location>
</feature>
<feature type="binding site" evidence="1">
    <location>
        <begin position="23"/>
        <end position="30"/>
    </location>
    <ligand>
        <name>GTP</name>
        <dbReference type="ChEBI" id="CHEBI:37565"/>
    </ligand>
</feature>
<feature type="binding site" evidence="1">
    <location>
        <begin position="66"/>
        <end position="70"/>
    </location>
    <ligand>
        <name>GTP</name>
        <dbReference type="ChEBI" id="CHEBI:37565"/>
    </ligand>
</feature>
<feature type="binding site" evidence="1">
    <location>
        <position position="68"/>
    </location>
    <ligand>
        <name>GTP</name>
        <dbReference type="ChEBI" id="CHEBI:37565"/>
    </ligand>
</feature>
<feature type="binding site" evidence="1">
    <location>
        <begin position="125"/>
        <end position="128"/>
    </location>
    <ligand>
        <name>GTP</name>
        <dbReference type="ChEBI" id="CHEBI:37565"/>
    </ligand>
</feature>
<feature type="modified residue" description="Phosphoserine" evidence="8">
    <location>
        <position position="45"/>
    </location>
</feature>
<feature type="lipid moiety-binding region" description="N-myristoyl glycine" evidence="3">
    <location>
        <position position="2"/>
    </location>
</feature>
<feature type="cross-link" description="Glycyl lysine isopeptide (Lys-Gly) (interchain with G-Cter in ubiquitin)" evidence="2">
    <location>
        <position position="71"/>
    </location>
</feature>
<evidence type="ECO:0000250" key="1"/>
<evidence type="ECO:0000250" key="2">
    <source>
        <dbReference type="UniProtKB" id="P36404"/>
    </source>
</evidence>
<evidence type="ECO:0000255" key="3"/>
<evidence type="ECO:0000269" key="4">
    <source>
    </source>
</evidence>
<evidence type="ECO:0000269" key="5">
    <source>
    </source>
</evidence>
<evidence type="ECO:0000269" key="6">
    <source>
    </source>
</evidence>
<evidence type="ECO:0000305" key="7"/>
<evidence type="ECO:0007744" key="8">
    <source>
    </source>
</evidence>
<organism>
    <name type="scientific">Rattus norvegicus</name>
    <name type="common">Rat</name>
    <dbReference type="NCBI Taxonomy" id="10116"/>
    <lineage>
        <taxon>Eukaryota</taxon>
        <taxon>Metazoa</taxon>
        <taxon>Chordata</taxon>
        <taxon>Craniata</taxon>
        <taxon>Vertebrata</taxon>
        <taxon>Euteleostomi</taxon>
        <taxon>Mammalia</taxon>
        <taxon>Eutheria</taxon>
        <taxon>Euarchontoglires</taxon>
        <taxon>Glires</taxon>
        <taxon>Rodentia</taxon>
        <taxon>Myomorpha</taxon>
        <taxon>Muroidea</taxon>
        <taxon>Muridae</taxon>
        <taxon>Murinae</taxon>
        <taxon>Rattus</taxon>
    </lineage>
</organism>
<reference key="1">
    <citation type="journal article" date="1997" name="Eur. J. Biochem.">
        <title>An ADP-ribosylation-factor(ARF)-like protein involved in regulated secretion.</title>
        <authorList>
            <person name="Icard-Liepkalns C."/>
            <person name="Ravassard P."/>
            <person name="Liepkalns V.A."/>
            <person name="Chatail F."/>
            <person name="Mallet J."/>
        </authorList>
    </citation>
    <scope>NUCLEOTIDE SEQUENCE [MRNA]</scope>
    <source>
        <strain>Wistar</strain>
        <tissue>Brain</tissue>
    </source>
</reference>
<reference key="2">
    <citation type="journal article" date="2002" name="Mol. Biol. Cell">
        <title>ARL2 and BART enter mitochondria and bind the adenine nucleotide transporter.</title>
        <authorList>
            <person name="Sharer J.D."/>
            <person name="Shern J.F."/>
            <person name="Van Valkenburgh H."/>
            <person name="Wallace D.C."/>
            <person name="Kahn R.A."/>
        </authorList>
    </citation>
    <scope>SUBCELLULAR LOCATION</scope>
    <scope>TISSUE SPECIFICITY</scope>
</reference>
<reference key="3">
    <citation type="journal article" date="2003" name="FEBS Lett.">
        <title>Photoreceptor synaptic protein HRG4 (UNC119) interacts with ARL2 via a putative conserved domain.</title>
        <authorList>
            <person name="Kobayashi A."/>
            <person name="Kubota S."/>
            <person name="Mori N."/>
            <person name="McLaren M.J."/>
            <person name="Inana G."/>
        </authorList>
    </citation>
    <scope>INTERACTION WITH UNC119</scope>
    <scope>TISSUE SPECIFICITY</scope>
</reference>
<reference key="4">
    <citation type="journal article" date="2003" name="J. Biol. Chem.">
        <title>Cytosolic Arl2 is complexed with cofactor D and protein phosphatase 2A.</title>
        <authorList>
            <person name="Shern J.F."/>
            <person name="Sharer J.D."/>
            <person name="Pallas D.C."/>
            <person name="Bartolini F."/>
            <person name="Cowan N.J."/>
            <person name="Reed M.S."/>
            <person name="Pohl J."/>
            <person name="Kahn R.A."/>
        </authorList>
    </citation>
    <scope>TISSUE SPECIFICITY</scope>
</reference>
<reference key="5">
    <citation type="journal article" date="2012" name="Nat. Commun.">
        <title>Quantitative maps of protein phosphorylation sites across 14 different rat organs and tissues.</title>
        <authorList>
            <person name="Lundby A."/>
            <person name="Secher A."/>
            <person name="Lage K."/>
            <person name="Nordsborg N.B."/>
            <person name="Dmytriyev A."/>
            <person name="Lundby C."/>
            <person name="Olsen J.V."/>
        </authorList>
    </citation>
    <scope>PHOSPHORYLATION [LARGE SCALE ANALYSIS] AT SER-45</scope>
    <scope>IDENTIFICATION BY MASS SPECTROMETRY [LARGE SCALE ANALYSIS]</scope>
</reference>
<proteinExistence type="evidence at protein level"/>